<protein>
    <recommendedName>
        <fullName evidence="1">Exosome complex component Rrp4</fullName>
    </recommendedName>
</protein>
<reference key="1">
    <citation type="journal article" date="2004" name="Proc. Natl. Acad. Sci. U.S.A.">
        <title>Genome sequence of Picrophilus torridus and its implications for life around pH 0.</title>
        <authorList>
            <person name="Fuetterer O."/>
            <person name="Angelov A."/>
            <person name="Liesegang H."/>
            <person name="Gottschalk G."/>
            <person name="Schleper C."/>
            <person name="Schepers B."/>
            <person name="Dock C."/>
            <person name="Antranikian G."/>
            <person name="Liebl W."/>
        </authorList>
    </citation>
    <scope>NUCLEOTIDE SEQUENCE [LARGE SCALE GENOMIC DNA]</scope>
    <source>
        <strain>ATCC 700027 / DSM 9790 / JCM 10055 / NBRC 100828 / KAW 2/3</strain>
    </source>
</reference>
<organism>
    <name type="scientific">Picrophilus torridus (strain ATCC 700027 / DSM 9790 / JCM 10055 / NBRC 100828 / KAW 2/3)</name>
    <dbReference type="NCBI Taxonomy" id="1122961"/>
    <lineage>
        <taxon>Archaea</taxon>
        <taxon>Methanobacteriati</taxon>
        <taxon>Thermoplasmatota</taxon>
        <taxon>Thermoplasmata</taxon>
        <taxon>Thermoplasmatales</taxon>
        <taxon>Picrophilaceae</taxon>
        <taxon>Picrophilus</taxon>
    </lineage>
</organism>
<name>RRP4_PICTO</name>
<sequence>MEIRQIVYPGEKIDLEGQKPRNGLYEENDEYYSEYFGVVQKSDKFIDIVPFNGPYMPRINDKVIGKVIDVSATMWTVDINSPYFSLMHMNDTPWHVTSGDLRKYLNVGDYIYAKVSILNEIKESWLSLKDVNLRKLEEGSIIYIKAPKVPRVIGKAGNMINMIKSETNTKIIVGQNGLIWIDGEPENVDLAINAIGMVEKEAHTFGLTDRVKAYLDKMKGGNNGRSEVNQ</sequence>
<gene>
    <name evidence="1" type="primary">rrp4</name>
    <name type="ordered locus">PTO0395</name>
</gene>
<feature type="chain" id="PRO_0000416235" description="Exosome complex component Rrp4">
    <location>
        <begin position="1"/>
        <end position="230"/>
    </location>
</feature>
<feature type="domain" description="S1 motif" evidence="1">
    <location>
        <begin position="60"/>
        <end position="129"/>
    </location>
</feature>
<feature type="domain" description="KH" evidence="1">
    <location>
        <begin position="137"/>
        <end position="195"/>
    </location>
</feature>
<dbReference type="EMBL" id="AE017261">
    <property type="protein sequence ID" value="AAT42980.1"/>
    <property type="molecule type" value="Genomic_DNA"/>
</dbReference>
<dbReference type="RefSeq" id="WP_011177196.1">
    <property type="nucleotide sequence ID" value="NC_005877.1"/>
</dbReference>
<dbReference type="SMR" id="Q6L222"/>
<dbReference type="FunCoup" id="Q6L222">
    <property type="interactions" value="130"/>
</dbReference>
<dbReference type="STRING" id="263820.PTO0395"/>
<dbReference type="PaxDb" id="263820-PTO0395"/>
<dbReference type="GeneID" id="2844247"/>
<dbReference type="KEGG" id="pto:PTO0395"/>
<dbReference type="PATRIC" id="fig|263820.9.peg.419"/>
<dbReference type="eggNOG" id="arCOG00678">
    <property type="taxonomic scope" value="Archaea"/>
</dbReference>
<dbReference type="HOGENOM" id="CLU_071769_0_0_2"/>
<dbReference type="InParanoid" id="Q6L222"/>
<dbReference type="OrthoDB" id="35160at2157"/>
<dbReference type="Proteomes" id="UP000000438">
    <property type="component" value="Chromosome"/>
</dbReference>
<dbReference type="GO" id="GO:0005737">
    <property type="term" value="C:cytoplasm"/>
    <property type="evidence" value="ECO:0007669"/>
    <property type="project" value="UniProtKB-SubCell"/>
</dbReference>
<dbReference type="GO" id="GO:0000178">
    <property type="term" value="C:exosome (RNase complex)"/>
    <property type="evidence" value="ECO:0007669"/>
    <property type="project" value="UniProtKB-KW"/>
</dbReference>
<dbReference type="GO" id="GO:0008143">
    <property type="term" value="F:poly(A) binding"/>
    <property type="evidence" value="ECO:0007669"/>
    <property type="project" value="InterPro"/>
</dbReference>
<dbReference type="GO" id="GO:0071034">
    <property type="term" value="P:CUT catabolic process"/>
    <property type="evidence" value="ECO:0007669"/>
    <property type="project" value="TreeGrafter"/>
</dbReference>
<dbReference type="GO" id="GO:0000467">
    <property type="term" value="P:exonucleolytic trimming to generate mature 3'-end of 5.8S rRNA from tricistronic rRNA transcript (SSU-rRNA, 5.8S rRNA, LSU-rRNA)"/>
    <property type="evidence" value="ECO:0007669"/>
    <property type="project" value="TreeGrafter"/>
</dbReference>
<dbReference type="GO" id="GO:0071051">
    <property type="term" value="P:poly(A)-dependent snoRNA 3'-end processing"/>
    <property type="evidence" value="ECO:0007669"/>
    <property type="project" value="TreeGrafter"/>
</dbReference>
<dbReference type="GO" id="GO:0006401">
    <property type="term" value="P:RNA catabolic process"/>
    <property type="evidence" value="ECO:0007669"/>
    <property type="project" value="UniProtKB-UniRule"/>
</dbReference>
<dbReference type="GO" id="GO:0034475">
    <property type="term" value="P:U4 snRNA 3'-end processing"/>
    <property type="evidence" value="ECO:0007669"/>
    <property type="project" value="TreeGrafter"/>
</dbReference>
<dbReference type="CDD" id="cd22524">
    <property type="entry name" value="KH-I_Rrp4_prokar"/>
    <property type="match status" value="1"/>
</dbReference>
<dbReference type="CDD" id="cd05789">
    <property type="entry name" value="S1_Rrp4"/>
    <property type="match status" value="1"/>
</dbReference>
<dbReference type="Gene3D" id="2.40.50.100">
    <property type="match status" value="1"/>
</dbReference>
<dbReference type="Gene3D" id="3.30.1370.10">
    <property type="entry name" value="K Homology domain, type 1"/>
    <property type="match status" value="1"/>
</dbReference>
<dbReference type="Gene3D" id="2.40.50.140">
    <property type="entry name" value="Nucleic acid-binding proteins"/>
    <property type="match status" value="1"/>
</dbReference>
<dbReference type="HAMAP" id="MF_00623">
    <property type="entry name" value="Exosome_Rrp4"/>
    <property type="match status" value="1"/>
</dbReference>
<dbReference type="InterPro" id="IPR026699">
    <property type="entry name" value="Exosome_RNA_bind1/RRP40/RRP4"/>
</dbReference>
<dbReference type="InterPro" id="IPR004087">
    <property type="entry name" value="KH_dom"/>
</dbReference>
<dbReference type="InterPro" id="IPR004088">
    <property type="entry name" value="KH_dom_type_1"/>
</dbReference>
<dbReference type="InterPro" id="IPR036612">
    <property type="entry name" value="KH_dom_type_1_sf"/>
</dbReference>
<dbReference type="InterPro" id="IPR012340">
    <property type="entry name" value="NA-bd_OB-fold"/>
</dbReference>
<dbReference type="InterPro" id="IPR023474">
    <property type="entry name" value="Rrp4"/>
</dbReference>
<dbReference type="InterPro" id="IPR048565">
    <property type="entry name" value="RRP4_S1"/>
</dbReference>
<dbReference type="NCBIfam" id="NF003181">
    <property type="entry name" value="PRK04163.1-1"/>
    <property type="match status" value="1"/>
</dbReference>
<dbReference type="PANTHER" id="PTHR21321:SF4">
    <property type="entry name" value="EXOSOME COMPLEX COMPONENT RRP4"/>
    <property type="match status" value="1"/>
</dbReference>
<dbReference type="PANTHER" id="PTHR21321">
    <property type="entry name" value="PNAS-3 RELATED"/>
    <property type="match status" value="1"/>
</dbReference>
<dbReference type="Pfam" id="PF00013">
    <property type="entry name" value="KH_1"/>
    <property type="match status" value="1"/>
</dbReference>
<dbReference type="Pfam" id="PF21262">
    <property type="entry name" value="RRP40_S1"/>
    <property type="match status" value="1"/>
</dbReference>
<dbReference type="SMART" id="SM00322">
    <property type="entry name" value="KH"/>
    <property type="match status" value="1"/>
</dbReference>
<dbReference type="SUPFAM" id="SSF54791">
    <property type="entry name" value="Eukaryotic type KH-domain (KH-domain type I)"/>
    <property type="match status" value="1"/>
</dbReference>
<dbReference type="SUPFAM" id="SSF50249">
    <property type="entry name" value="Nucleic acid-binding proteins"/>
    <property type="match status" value="1"/>
</dbReference>
<dbReference type="SUPFAM" id="SSF110324">
    <property type="entry name" value="Ribosomal L27 protein-like"/>
    <property type="match status" value="1"/>
</dbReference>
<dbReference type="PROSITE" id="PS50084">
    <property type="entry name" value="KH_TYPE_1"/>
    <property type="match status" value="1"/>
</dbReference>
<comment type="function">
    <text evidence="1">Non-catalytic component of the exosome, which is a complex involved in RNA degradation. Increases the RNA binding and the efficiency of RNA degradation. Confers strong poly(A) specificity to the exosome.</text>
</comment>
<comment type="subunit">
    <text evidence="1">Component of the archaeal exosome complex. Forms a trimer of Rrp4 and/or Csl4 subunits. The trimer associates with a hexameric ring-like arrangement composed of 3 Rrp41-Rrp42 heterodimers.</text>
</comment>
<comment type="subcellular location">
    <subcellularLocation>
        <location evidence="1">Cytoplasm</location>
    </subcellularLocation>
</comment>
<comment type="similarity">
    <text evidence="1">Belongs to the RRP4 family.</text>
</comment>
<evidence type="ECO:0000255" key="1">
    <source>
        <dbReference type="HAMAP-Rule" id="MF_00623"/>
    </source>
</evidence>
<proteinExistence type="inferred from homology"/>
<accession>Q6L222</accession>
<keyword id="KW-0963">Cytoplasm</keyword>
<keyword id="KW-0271">Exosome</keyword>
<keyword id="KW-0694">RNA-binding</keyword>